<dbReference type="EC" id="5.3.1.23" evidence="1"/>
<dbReference type="EMBL" id="CP001349">
    <property type="protein sequence ID" value="ACL61464.1"/>
    <property type="molecule type" value="Genomic_DNA"/>
</dbReference>
<dbReference type="RefSeq" id="WP_015933033.1">
    <property type="nucleotide sequence ID" value="NC_011894.1"/>
</dbReference>
<dbReference type="SMR" id="B8IEX1"/>
<dbReference type="STRING" id="460265.Mnod_6703"/>
<dbReference type="KEGG" id="mno:Mnod_6703"/>
<dbReference type="eggNOG" id="COG0182">
    <property type="taxonomic scope" value="Bacteria"/>
</dbReference>
<dbReference type="HOGENOM" id="CLU_016218_1_2_5"/>
<dbReference type="OrthoDB" id="9803436at2"/>
<dbReference type="UniPathway" id="UPA00904">
    <property type="reaction ID" value="UER00874"/>
</dbReference>
<dbReference type="Proteomes" id="UP000008207">
    <property type="component" value="Chromosome"/>
</dbReference>
<dbReference type="GO" id="GO:0046523">
    <property type="term" value="F:S-methyl-5-thioribose-1-phosphate isomerase activity"/>
    <property type="evidence" value="ECO:0007669"/>
    <property type="project" value="UniProtKB-UniRule"/>
</dbReference>
<dbReference type="GO" id="GO:0019509">
    <property type="term" value="P:L-methionine salvage from methylthioadenosine"/>
    <property type="evidence" value="ECO:0007669"/>
    <property type="project" value="UniProtKB-UniRule"/>
</dbReference>
<dbReference type="FunFam" id="1.20.120.420:FF:000003">
    <property type="entry name" value="Methylthioribose-1-phosphate isomerase"/>
    <property type="match status" value="1"/>
</dbReference>
<dbReference type="FunFam" id="3.40.50.10470:FF:000006">
    <property type="entry name" value="Methylthioribose-1-phosphate isomerase"/>
    <property type="match status" value="1"/>
</dbReference>
<dbReference type="Gene3D" id="1.20.120.420">
    <property type="entry name" value="translation initiation factor eif-2b, domain 1"/>
    <property type="match status" value="1"/>
</dbReference>
<dbReference type="Gene3D" id="3.40.50.10470">
    <property type="entry name" value="Translation initiation factor eif-2b, domain 2"/>
    <property type="match status" value="1"/>
</dbReference>
<dbReference type="HAMAP" id="MF_01678">
    <property type="entry name" value="Salvage_MtnA"/>
    <property type="match status" value="1"/>
</dbReference>
<dbReference type="InterPro" id="IPR000649">
    <property type="entry name" value="IF-2B-related"/>
</dbReference>
<dbReference type="InterPro" id="IPR005251">
    <property type="entry name" value="IF-M1Pi"/>
</dbReference>
<dbReference type="InterPro" id="IPR042529">
    <property type="entry name" value="IF_2B-like_C"/>
</dbReference>
<dbReference type="InterPro" id="IPR011559">
    <property type="entry name" value="Initiation_fac_2B_a/b/d"/>
</dbReference>
<dbReference type="InterPro" id="IPR027363">
    <property type="entry name" value="M1Pi_N"/>
</dbReference>
<dbReference type="InterPro" id="IPR037171">
    <property type="entry name" value="NagB/RpiA_transferase-like"/>
</dbReference>
<dbReference type="NCBIfam" id="TIGR00524">
    <property type="entry name" value="eIF-2B_rel"/>
    <property type="match status" value="1"/>
</dbReference>
<dbReference type="NCBIfam" id="NF004326">
    <property type="entry name" value="PRK05720.1"/>
    <property type="match status" value="1"/>
</dbReference>
<dbReference type="NCBIfam" id="TIGR00512">
    <property type="entry name" value="salvage_mtnA"/>
    <property type="match status" value="1"/>
</dbReference>
<dbReference type="PANTHER" id="PTHR43475">
    <property type="entry name" value="METHYLTHIORIBOSE-1-PHOSPHATE ISOMERASE"/>
    <property type="match status" value="1"/>
</dbReference>
<dbReference type="PANTHER" id="PTHR43475:SF1">
    <property type="entry name" value="METHYLTHIORIBOSE-1-PHOSPHATE ISOMERASE"/>
    <property type="match status" value="1"/>
</dbReference>
<dbReference type="Pfam" id="PF01008">
    <property type="entry name" value="IF-2B"/>
    <property type="match status" value="1"/>
</dbReference>
<dbReference type="SUPFAM" id="SSF100950">
    <property type="entry name" value="NagB/RpiA/CoA transferase-like"/>
    <property type="match status" value="1"/>
</dbReference>
<reference key="1">
    <citation type="submission" date="2009-01" db="EMBL/GenBank/DDBJ databases">
        <title>Complete sequence of chromosome of Methylobacterium nodulans ORS 2060.</title>
        <authorList>
            <consortium name="US DOE Joint Genome Institute"/>
            <person name="Lucas S."/>
            <person name="Copeland A."/>
            <person name="Lapidus A."/>
            <person name="Glavina del Rio T."/>
            <person name="Dalin E."/>
            <person name="Tice H."/>
            <person name="Bruce D."/>
            <person name="Goodwin L."/>
            <person name="Pitluck S."/>
            <person name="Sims D."/>
            <person name="Brettin T."/>
            <person name="Detter J.C."/>
            <person name="Han C."/>
            <person name="Larimer F."/>
            <person name="Land M."/>
            <person name="Hauser L."/>
            <person name="Kyrpides N."/>
            <person name="Ivanova N."/>
            <person name="Marx C.J."/>
            <person name="Richardson P."/>
        </authorList>
    </citation>
    <scope>NUCLEOTIDE SEQUENCE [LARGE SCALE GENOMIC DNA]</scope>
    <source>
        <strain>LMG 21967 / CNCM I-2342 / ORS 2060</strain>
    </source>
</reference>
<organism>
    <name type="scientific">Methylobacterium nodulans (strain LMG 21967 / CNCM I-2342 / ORS 2060)</name>
    <dbReference type="NCBI Taxonomy" id="460265"/>
    <lineage>
        <taxon>Bacteria</taxon>
        <taxon>Pseudomonadati</taxon>
        <taxon>Pseudomonadota</taxon>
        <taxon>Alphaproteobacteria</taxon>
        <taxon>Hyphomicrobiales</taxon>
        <taxon>Methylobacteriaceae</taxon>
        <taxon>Methylobacterium</taxon>
    </lineage>
</organism>
<protein>
    <recommendedName>
        <fullName evidence="1">Methylthioribose-1-phosphate isomerase</fullName>
        <shortName evidence="1">M1Pi</shortName>
        <shortName evidence="1">MTR-1-P isomerase</shortName>
        <ecNumber evidence="1">5.3.1.23</ecNumber>
    </recommendedName>
    <alternativeName>
        <fullName evidence="1">S-methyl-5-thioribose-1-phosphate isomerase</fullName>
    </alternativeName>
</protein>
<evidence type="ECO:0000255" key="1">
    <source>
        <dbReference type="HAMAP-Rule" id="MF_01678"/>
    </source>
</evidence>
<evidence type="ECO:0000305" key="2"/>
<feature type="chain" id="PRO_1000187363" description="Methylthioribose-1-phosphate isomerase">
    <location>
        <begin position="1"/>
        <end position="364"/>
    </location>
</feature>
<feature type="active site" description="Proton donor" evidence="1">
    <location>
        <position position="241"/>
    </location>
</feature>
<feature type="binding site" evidence="1">
    <location>
        <begin position="53"/>
        <end position="55"/>
    </location>
    <ligand>
        <name>substrate</name>
    </ligand>
</feature>
<feature type="binding site" evidence="1">
    <location>
        <position position="90"/>
    </location>
    <ligand>
        <name>substrate</name>
    </ligand>
</feature>
<feature type="binding site" evidence="1">
    <location>
        <position position="200"/>
    </location>
    <ligand>
        <name>substrate</name>
    </ligand>
</feature>
<feature type="binding site" evidence="1">
    <location>
        <begin position="251"/>
        <end position="252"/>
    </location>
    <ligand>
        <name>substrate</name>
    </ligand>
</feature>
<feature type="site" description="Transition state stabilizer" evidence="1">
    <location>
        <position position="161"/>
    </location>
</feature>
<sequence>MKIDGRPYRTIFPEPGGDAVCVIDQTRLPFAFEIRRLTTAEEAAEAIRTMVVRGAPLIGVTAAYGLALGLRRDPSDAGLERIAAMLAATRPTAVNLRWALERLSGILRPLPPDTRAPQAFAEAGRIAEEDVANCRAIGEHGARLIAQTAAKGRRVNVLTHCNAGWLATVDWGTALAPIYVAHDAGVPVHVFVDETRPRNQGAALTAFELNAHGVPHTVVADNAGGHLMQHGGVDLCIVGSDRTTSTGDVCNKIGTYLKALAAFDNGVPFYAALPVSTIDWTLTDGVAGIPIEERDGREVTHLTGRTEDGGFATIQVVSPGSPVANPAFDVTPARLVTGLITERGVAEATEEGLLRLYPERRKAA</sequence>
<keyword id="KW-0028">Amino-acid biosynthesis</keyword>
<keyword id="KW-0413">Isomerase</keyword>
<keyword id="KW-0486">Methionine biosynthesis</keyword>
<keyword id="KW-1185">Reference proteome</keyword>
<accession>B8IEX1</accession>
<gene>
    <name evidence="1" type="primary">mtnA</name>
    <name type="ordered locus">Mnod_6703</name>
</gene>
<comment type="function">
    <text evidence="1">Catalyzes the interconversion of methylthioribose-1-phosphate (MTR-1-P) into methylthioribulose-1-phosphate (MTRu-1-P).</text>
</comment>
<comment type="catalytic activity">
    <reaction evidence="1">
        <text>5-(methylsulfanyl)-alpha-D-ribose 1-phosphate = 5-(methylsulfanyl)-D-ribulose 1-phosphate</text>
        <dbReference type="Rhea" id="RHEA:19989"/>
        <dbReference type="ChEBI" id="CHEBI:58533"/>
        <dbReference type="ChEBI" id="CHEBI:58548"/>
        <dbReference type="EC" id="5.3.1.23"/>
    </reaction>
</comment>
<comment type="pathway">
    <text evidence="1">Amino-acid biosynthesis; L-methionine biosynthesis via salvage pathway; L-methionine from S-methyl-5-thio-alpha-D-ribose 1-phosphate: step 1/6.</text>
</comment>
<comment type="similarity">
    <text evidence="2">Belongs to the eIF-2B alpha/beta/delta subunits family. MtnA subfamily.</text>
</comment>
<proteinExistence type="inferred from homology"/>
<name>MTNA_METNO</name>